<organism>
    <name type="scientific">Listeria innocua serovar 6a (strain ATCC BAA-680 / CLIP 11262)</name>
    <dbReference type="NCBI Taxonomy" id="272626"/>
    <lineage>
        <taxon>Bacteria</taxon>
        <taxon>Bacillati</taxon>
        <taxon>Bacillota</taxon>
        <taxon>Bacilli</taxon>
        <taxon>Bacillales</taxon>
        <taxon>Listeriaceae</taxon>
        <taxon>Listeria</taxon>
    </lineage>
</organism>
<sequence>MAVKIRLKRMGSKKKPFYRIVVADSRFPRDGRSIETIGTYNPLLDPVEVKIDEEATLKWMHNGAKPSDTVRNLLSREGIMEKFHNQKLGK</sequence>
<reference key="1">
    <citation type="journal article" date="2001" name="Science">
        <title>Comparative genomics of Listeria species.</title>
        <authorList>
            <person name="Glaser P."/>
            <person name="Frangeul L."/>
            <person name="Buchrieser C."/>
            <person name="Rusniok C."/>
            <person name="Amend A."/>
            <person name="Baquero F."/>
            <person name="Berche P."/>
            <person name="Bloecker H."/>
            <person name="Brandt P."/>
            <person name="Chakraborty T."/>
            <person name="Charbit A."/>
            <person name="Chetouani F."/>
            <person name="Couve E."/>
            <person name="de Daruvar A."/>
            <person name="Dehoux P."/>
            <person name="Domann E."/>
            <person name="Dominguez-Bernal G."/>
            <person name="Duchaud E."/>
            <person name="Durant L."/>
            <person name="Dussurget O."/>
            <person name="Entian K.-D."/>
            <person name="Fsihi H."/>
            <person name="Garcia-del Portillo F."/>
            <person name="Garrido P."/>
            <person name="Gautier L."/>
            <person name="Goebel W."/>
            <person name="Gomez-Lopez N."/>
            <person name="Hain T."/>
            <person name="Hauf J."/>
            <person name="Jackson D."/>
            <person name="Jones L.-M."/>
            <person name="Kaerst U."/>
            <person name="Kreft J."/>
            <person name="Kuhn M."/>
            <person name="Kunst F."/>
            <person name="Kurapkat G."/>
            <person name="Madueno E."/>
            <person name="Maitournam A."/>
            <person name="Mata Vicente J."/>
            <person name="Ng E."/>
            <person name="Nedjari H."/>
            <person name="Nordsiek G."/>
            <person name="Novella S."/>
            <person name="de Pablos B."/>
            <person name="Perez-Diaz J.-C."/>
            <person name="Purcell R."/>
            <person name="Remmel B."/>
            <person name="Rose M."/>
            <person name="Schlueter T."/>
            <person name="Simoes N."/>
            <person name="Tierrez A."/>
            <person name="Vazquez-Boland J.-A."/>
            <person name="Voss H."/>
            <person name="Wehland J."/>
            <person name="Cossart P."/>
        </authorList>
    </citation>
    <scope>NUCLEOTIDE SEQUENCE [LARGE SCALE GENOMIC DNA]</scope>
    <source>
        <strain>ATCC BAA-680 / CLIP 11262</strain>
    </source>
</reference>
<dbReference type="EMBL" id="AL596170">
    <property type="protein sequence ID" value="CAC97141.1"/>
    <property type="molecule type" value="Genomic_DNA"/>
</dbReference>
<dbReference type="PIR" id="AE1671">
    <property type="entry name" value="AE1671"/>
</dbReference>
<dbReference type="RefSeq" id="WP_003767413.1">
    <property type="nucleotide sequence ID" value="NC_003212.1"/>
</dbReference>
<dbReference type="SMR" id="Q92AL1"/>
<dbReference type="STRING" id="272626.gene:17566269"/>
<dbReference type="GeneID" id="93235249"/>
<dbReference type="KEGG" id="lin:rpsP"/>
<dbReference type="eggNOG" id="COG0228">
    <property type="taxonomic scope" value="Bacteria"/>
</dbReference>
<dbReference type="HOGENOM" id="CLU_100590_5_0_9"/>
<dbReference type="OrthoDB" id="9807878at2"/>
<dbReference type="Proteomes" id="UP000002513">
    <property type="component" value="Chromosome"/>
</dbReference>
<dbReference type="GO" id="GO:0005737">
    <property type="term" value="C:cytoplasm"/>
    <property type="evidence" value="ECO:0007669"/>
    <property type="project" value="UniProtKB-ARBA"/>
</dbReference>
<dbReference type="GO" id="GO:0015935">
    <property type="term" value="C:small ribosomal subunit"/>
    <property type="evidence" value="ECO:0007669"/>
    <property type="project" value="TreeGrafter"/>
</dbReference>
<dbReference type="GO" id="GO:0003735">
    <property type="term" value="F:structural constituent of ribosome"/>
    <property type="evidence" value="ECO:0007669"/>
    <property type="project" value="InterPro"/>
</dbReference>
<dbReference type="GO" id="GO:0006412">
    <property type="term" value="P:translation"/>
    <property type="evidence" value="ECO:0007669"/>
    <property type="project" value="UniProtKB-UniRule"/>
</dbReference>
<dbReference type="FunFam" id="3.30.1320.10:FF:000002">
    <property type="entry name" value="30S ribosomal protein S16"/>
    <property type="match status" value="1"/>
</dbReference>
<dbReference type="Gene3D" id="3.30.1320.10">
    <property type="match status" value="1"/>
</dbReference>
<dbReference type="HAMAP" id="MF_00385">
    <property type="entry name" value="Ribosomal_bS16"/>
    <property type="match status" value="1"/>
</dbReference>
<dbReference type="InterPro" id="IPR000307">
    <property type="entry name" value="Ribosomal_bS16"/>
</dbReference>
<dbReference type="InterPro" id="IPR023803">
    <property type="entry name" value="Ribosomal_bS16_dom_sf"/>
</dbReference>
<dbReference type="NCBIfam" id="TIGR00002">
    <property type="entry name" value="S16"/>
    <property type="match status" value="1"/>
</dbReference>
<dbReference type="PANTHER" id="PTHR12919">
    <property type="entry name" value="30S RIBOSOMAL PROTEIN S16"/>
    <property type="match status" value="1"/>
</dbReference>
<dbReference type="PANTHER" id="PTHR12919:SF20">
    <property type="entry name" value="SMALL RIBOSOMAL SUBUNIT PROTEIN BS16M"/>
    <property type="match status" value="1"/>
</dbReference>
<dbReference type="Pfam" id="PF00886">
    <property type="entry name" value="Ribosomal_S16"/>
    <property type="match status" value="1"/>
</dbReference>
<dbReference type="SUPFAM" id="SSF54565">
    <property type="entry name" value="Ribosomal protein S16"/>
    <property type="match status" value="1"/>
</dbReference>
<proteinExistence type="inferred from homology"/>
<name>RS16_LISIN</name>
<accession>Q92AL1</accession>
<keyword id="KW-0687">Ribonucleoprotein</keyword>
<keyword id="KW-0689">Ribosomal protein</keyword>
<evidence type="ECO:0000255" key="1">
    <source>
        <dbReference type="HAMAP-Rule" id="MF_00385"/>
    </source>
</evidence>
<evidence type="ECO:0000305" key="2"/>
<protein>
    <recommendedName>
        <fullName evidence="1">Small ribosomal subunit protein bS16</fullName>
    </recommendedName>
    <alternativeName>
        <fullName evidence="2">30S ribosomal protein S16</fullName>
    </alternativeName>
</protein>
<feature type="chain" id="PRO_0000167202" description="Small ribosomal subunit protein bS16">
    <location>
        <begin position="1"/>
        <end position="90"/>
    </location>
</feature>
<gene>
    <name evidence="1" type="primary">rpsP</name>
    <name type="ordered locus">lin1911</name>
</gene>
<comment type="similarity">
    <text evidence="1">Belongs to the bacterial ribosomal protein bS16 family.</text>
</comment>